<organism>
    <name type="scientific">Saccharomyces cerevisiae (strain ATCC 204508 / S288c)</name>
    <name type="common">Baker's yeast</name>
    <dbReference type="NCBI Taxonomy" id="559292"/>
    <lineage>
        <taxon>Eukaryota</taxon>
        <taxon>Fungi</taxon>
        <taxon>Dikarya</taxon>
        <taxon>Ascomycota</taxon>
        <taxon>Saccharomycotina</taxon>
        <taxon>Saccharomycetes</taxon>
        <taxon>Saccharomycetales</taxon>
        <taxon>Saccharomycetaceae</taxon>
        <taxon>Saccharomyces</taxon>
    </lineage>
</organism>
<proteinExistence type="evidence at protein level"/>
<protein>
    <recommendedName>
        <fullName>Probable serine/threonine-protein kinase KKQ8</fullName>
        <ecNumber>2.7.11.1</ecNumber>
    </recommendedName>
</protein>
<comment type="catalytic activity">
    <reaction>
        <text>L-seryl-[protein] + ATP = O-phospho-L-seryl-[protein] + ADP + H(+)</text>
        <dbReference type="Rhea" id="RHEA:17989"/>
        <dbReference type="Rhea" id="RHEA-COMP:9863"/>
        <dbReference type="Rhea" id="RHEA-COMP:11604"/>
        <dbReference type="ChEBI" id="CHEBI:15378"/>
        <dbReference type="ChEBI" id="CHEBI:29999"/>
        <dbReference type="ChEBI" id="CHEBI:30616"/>
        <dbReference type="ChEBI" id="CHEBI:83421"/>
        <dbReference type="ChEBI" id="CHEBI:456216"/>
        <dbReference type="EC" id="2.7.11.1"/>
    </reaction>
</comment>
<comment type="catalytic activity">
    <reaction>
        <text>L-threonyl-[protein] + ATP = O-phospho-L-threonyl-[protein] + ADP + H(+)</text>
        <dbReference type="Rhea" id="RHEA:46608"/>
        <dbReference type="Rhea" id="RHEA-COMP:11060"/>
        <dbReference type="Rhea" id="RHEA-COMP:11605"/>
        <dbReference type="ChEBI" id="CHEBI:15378"/>
        <dbReference type="ChEBI" id="CHEBI:30013"/>
        <dbReference type="ChEBI" id="CHEBI:30616"/>
        <dbReference type="ChEBI" id="CHEBI:61977"/>
        <dbReference type="ChEBI" id="CHEBI:456216"/>
        <dbReference type="EC" id="2.7.11.1"/>
    </reaction>
</comment>
<comment type="interaction">
    <interactant intactId="EBI-9792">
        <id>P36004</id>
    </interactant>
    <interactant intactId="EBI-3661">
        <id>P29311</id>
        <label>BMH1</label>
    </interactant>
    <organismsDiffer>false</organismsDiffer>
    <experiments>3</experiments>
</comment>
<comment type="subcellular location">
    <subcellularLocation>
        <location evidence="4">Cytoplasm</location>
    </subcellularLocation>
</comment>
<comment type="miscellaneous">
    <text evidence="5">Present with 981 molecules/cell in log phase SD medium.</text>
</comment>
<comment type="similarity">
    <text evidence="6">Belongs to the protein kinase superfamily. CAMK Ser/Thr protein kinase family. NPR/HAL subfamily. HAL5 sub-subfamily.</text>
</comment>
<comment type="sequence caution" evidence="6">
    <conflict type="erroneous initiation">
        <sequence resource="EMBL-CDS" id="CAA81519"/>
    </conflict>
</comment>
<comment type="sequence caution" evidence="6">
    <conflict type="erroneous initiation">
        <sequence resource="EMBL-CDS" id="CAA82010"/>
    </conflict>
</comment>
<feature type="chain" id="PRO_0000086151" description="Probable serine/threonine-protein kinase KKQ8">
    <location>
        <begin position="1"/>
        <end position="724"/>
    </location>
</feature>
<feature type="domain" description="Protein kinase" evidence="1">
    <location>
        <begin position="412"/>
        <end position="712"/>
    </location>
</feature>
<feature type="region of interest" description="Disordered" evidence="3">
    <location>
        <begin position="1"/>
        <end position="81"/>
    </location>
</feature>
<feature type="region of interest" description="Disordered" evidence="3">
    <location>
        <begin position="93"/>
        <end position="188"/>
    </location>
</feature>
<feature type="region of interest" description="Disordered" evidence="3">
    <location>
        <begin position="329"/>
        <end position="355"/>
    </location>
</feature>
<feature type="compositionally biased region" description="Low complexity" evidence="3">
    <location>
        <begin position="45"/>
        <end position="54"/>
    </location>
</feature>
<feature type="compositionally biased region" description="Polar residues" evidence="3">
    <location>
        <begin position="95"/>
        <end position="106"/>
    </location>
</feature>
<feature type="compositionally biased region" description="Low complexity" evidence="3">
    <location>
        <begin position="143"/>
        <end position="162"/>
    </location>
</feature>
<feature type="compositionally biased region" description="Polar residues" evidence="3">
    <location>
        <begin position="338"/>
        <end position="351"/>
    </location>
</feature>
<feature type="active site" description="Proton acceptor" evidence="1 2">
    <location>
        <position position="563"/>
    </location>
</feature>
<feature type="binding site" evidence="1">
    <location>
        <begin position="418"/>
        <end position="426"/>
    </location>
    <ligand>
        <name>ATP</name>
        <dbReference type="ChEBI" id="CHEBI:30616"/>
    </ligand>
</feature>
<feature type="binding site" evidence="1">
    <location>
        <position position="455"/>
    </location>
    <ligand>
        <name>ATP</name>
        <dbReference type="ChEBI" id="CHEBI:30616"/>
    </ligand>
</feature>
<feature type="modified residue" description="Phosphoserine" evidence="7">
    <location>
        <position position="19"/>
    </location>
</feature>
<feature type="modified residue" description="Phosphoserine" evidence="8 9 10">
    <location>
        <position position="232"/>
    </location>
</feature>
<feature type="modified residue" description="Phosphoserine" evidence="8">
    <location>
        <position position="238"/>
    </location>
</feature>
<feature type="modified residue" description="Phosphoserine" evidence="8">
    <location>
        <position position="241"/>
    </location>
</feature>
<sequence>MVMQEEKKRQQPVTRRVRSFSESFKNLFRPPRSRDSSPINVTRIPYRSSSTSPKRSSEPPRRSTVSAQILDPKNSPIRQRSYTLKCCTPGLSHPFRQTGSGASNSPTRHRSISGEEQEIVNSLPEYKRSASHTFHGIRRPRSRSSSVSSCDSSNGTTSSSDSQWAMDSLLDDSDNDLTPYRGSNKDILKSKDRAPYNYIDDYNKKALRRATSYPNPLPSKQFYNERLYTRRSHPDEESLESLPRFAGADVQCIIEQNGFKVYEDGSHEHNIKLSGVIAKLEKGNSLPAHRQGSLSRPRLGITLSGLFKHHKNECDIENALSLLPNVEKSQTNHEKRTGQSPNDSNRSSPTQGREDYLKIVNPDASLGSDELKLINSLSSRIHKSLQNYLQEKNLKPAECIGEQAPTFQDNYGHPVGLVGAGAYGEVKLCARLRNEKDSPPFETYHDSKYIYYAVKELKPKPDSDLEKFCTKITSEFIIGHSLSHYHKNGKKPAPNILNVFDILEDSSSFIEVMEFCPAGDLYGMLVGKSKLKGRLHPLEADCFMKQLLHGVKFMHDHGIAHCDLKPENILFYPHGLLKICDFGTSSVFQTAWERRVHAQKGIIGSEPYVAPEEFVDGEYYDPRLIDCWSCGVVYITMILGHYLWKVASREKDMSYDEFYKEMQRKNQFRVFEELKHVNSELATNRKIALYRIFQWEPRKRISVGKLLDMQWMKSTNCCLIYDST</sequence>
<gene>
    <name type="primary">KKQ8</name>
    <name type="ordered locus">YKL168C</name>
    <name type="ORF">YKL632</name>
</gene>
<accession>P36004</accession>
<accession>D6VX31</accession>
<keyword id="KW-0067">ATP-binding</keyword>
<keyword id="KW-0963">Cytoplasm</keyword>
<keyword id="KW-0418">Kinase</keyword>
<keyword id="KW-0547">Nucleotide-binding</keyword>
<keyword id="KW-0597">Phosphoprotein</keyword>
<keyword id="KW-1185">Reference proteome</keyword>
<keyword id="KW-0723">Serine/threonine-protein kinase</keyword>
<keyword id="KW-0808">Transferase</keyword>
<evidence type="ECO:0000255" key="1">
    <source>
        <dbReference type="PROSITE-ProRule" id="PRU00159"/>
    </source>
</evidence>
<evidence type="ECO:0000255" key="2">
    <source>
        <dbReference type="PROSITE-ProRule" id="PRU10027"/>
    </source>
</evidence>
<evidence type="ECO:0000256" key="3">
    <source>
        <dbReference type="SAM" id="MobiDB-lite"/>
    </source>
</evidence>
<evidence type="ECO:0000269" key="4">
    <source>
    </source>
</evidence>
<evidence type="ECO:0000269" key="5">
    <source>
    </source>
</evidence>
<evidence type="ECO:0000305" key="6"/>
<evidence type="ECO:0007744" key="7">
    <source>
    </source>
</evidence>
<evidence type="ECO:0007744" key="8">
    <source>
    </source>
</evidence>
<evidence type="ECO:0007744" key="9">
    <source>
    </source>
</evidence>
<evidence type="ECO:0007744" key="10">
    <source>
    </source>
</evidence>
<name>KKQ8_YEAST</name>
<reference key="1">
    <citation type="journal article" date="1994" name="Yeast">
        <title>Sequencing and analysis of a 20.5 kb DNA segment located on the left arm of yeast chromosome XI.</title>
        <authorList>
            <person name="Vandenbol M."/>
            <person name="Bolle P.-A."/>
            <person name="Dion C."/>
            <person name="Portetelle D."/>
            <person name="Hilger F."/>
        </authorList>
    </citation>
    <scope>NUCLEOTIDE SEQUENCE [GENOMIC DNA]</scope>
    <source>
        <strain>ATCC 204508 / S288c</strain>
    </source>
</reference>
<reference key="2">
    <citation type="journal article" date="1994" name="Nature">
        <title>Complete DNA sequence of yeast chromosome XI.</title>
        <authorList>
            <person name="Dujon B."/>
            <person name="Alexandraki D."/>
            <person name="Andre B."/>
            <person name="Ansorge W."/>
            <person name="Baladron V."/>
            <person name="Ballesta J.P.G."/>
            <person name="Banrevi A."/>
            <person name="Bolle P.-A."/>
            <person name="Bolotin-Fukuhara M."/>
            <person name="Bossier P."/>
            <person name="Bou G."/>
            <person name="Boyer J."/>
            <person name="Buitrago M.J."/>
            <person name="Cheret G."/>
            <person name="Colleaux L."/>
            <person name="Daignan-Fornier B."/>
            <person name="del Rey F."/>
            <person name="Dion C."/>
            <person name="Domdey H."/>
            <person name="Duesterhoeft A."/>
            <person name="Duesterhus S."/>
            <person name="Entian K.-D."/>
            <person name="Erfle H."/>
            <person name="Esteban P.F."/>
            <person name="Feldmann H."/>
            <person name="Fernandes L."/>
            <person name="Fobo G.M."/>
            <person name="Fritz C."/>
            <person name="Fukuhara H."/>
            <person name="Gabel C."/>
            <person name="Gaillon L."/>
            <person name="Garcia-Cantalejo J.M."/>
            <person name="Garcia-Ramirez J.J."/>
            <person name="Gent M.E."/>
            <person name="Ghazvini M."/>
            <person name="Goffeau A."/>
            <person name="Gonzalez A."/>
            <person name="Grothues D."/>
            <person name="Guerreiro P."/>
            <person name="Hegemann J.H."/>
            <person name="Hewitt N."/>
            <person name="Hilger F."/>
            <person name="Hollenberg C.P."/>
            <person name="Horaitis O."/>
            <person name="Indge K.J."/>
            <person name="Jacquier A."/>
            <person name="James C.M."/>
            <person name="Jauniaux J.-C."/>
            <person name="Jimenez A."/>
            <person name="Keuchel H."/>
            <person name="Kirchrath L."/>
            <person name="Kleine K."/>
            <person name="Koetter P."/>
            <person name="Legrain P."/>
            <person name="Liebl S."/>
            <person name="Louis E.J."/>
            <person name="Maia e Silva A."/>
            <person name="Marck C."/>
            <person name="Monnier A.-L."/>
            <person name="Moestl D."/>
            <person name="Mueller S."/>
            <person name="Obermaier B."/>
            <person name="Oliver S.G."/>
            <person name="Pallier C."/>
            <person name="Pascolo S."/>
            <person name="Pfeiffer F."/>
            <person name="Philippsen P."/>
            <person name="Planta R.J."/>
            <person name="Pohl F.M."/>
            <person name="Pohl T.M."/>
            <person name="Poehlmann R."/>
            <person name="Portetelle D."/>
            <person name="Purnelle B."/>
            <person name="Puzos V."/>
            <person name="Ramezani Rad M."/>
            <person name="Rasmussen S.W."/>
            <person name="Remacha M.A."/>
            <person name="Revuelta J.L."/>
            <person name="Richard G.-F."/>
            <person name="Rieger M."/>
            <person name="Rodrigues-Pousada C."/>
            <person name="Rose M."/>
            <person name="Rupp T."/>
            <person name="Santos M.A."/>
            <person name="Schwager C."/>
            <person name="Sensen C."/>
            <person name="Skala J."/>
            <person name="Soares H."/>
            <person name="Sor F."/>
            <person name="Stegemann J."/>
            <person name="Tettelin H."/>
            <person name="Thierry A."/>
            <person name="Tzermia M."/>
            <person name="Urrestarazu L.A."/>
            <person name="van Dyck L."/>
            <person name="van Vliet-Reedijk J.C."/>
            <person name="Valens M."/>
            <person name="Vandenbol M."/>
            <person name="Vilela C."/>
            <person name="Vissers S."/>
            <person name="von Wettstein D."/>
            <person name="Voss H."/>
            <person name="Wiemann S."/>
            <person name="Xu G."/>
            <person name="Zimmermann J."/>
            <person name="Haasemann M."/>
            <person name="Becker I."/>
            <person name="Mewes H.-W."/>
        </authorList>
    </citation>
    <scope>NUCLEOTIDE SEQUENCE [LARGE SCALE GENOMIC DNA]</scope>
    <source>
        <strain>ATCC 204508 / S288c</strain>
    </source>
</reference>
<reference key="3">
    <citation type="journal article" date="2014" name="G3 (Bethesda)">
        <title>The reference genome sequence of Saccharomyces cerevisiae: Then and now.</title>
        <authorList>
            <person name="Engel S.R."/>
            <person name="Dietrich F.S."/>
            <person name="Fisk D.G."/>
            <person name="Binkley G."/>
            <person name="Balakrishnan R."/>
            <person name="Costanzo M.C."/>
            <person name="Dwight S.S."/>
            <person name="Hitz B.C."/>
            <person name="Karra K."/>
            <person name="Nash R.S."/>
            <person name="Weng S."/>
            <person name="Wong E.D."/>
            <person name="Lloyd P."/>
            <person name="Skrzypek M.S."/>
            <person name="Miyasato S.R."/>
            <person name="Simison M."/>
            <person name="Cherry J.M."/>
        </authorList>
    </citation>
    <scope>GENOME REANNOTATION</scope>
    <source>
        <strain>ATCC 204508 / S288c</strain>
    </source>
</reference>
<reference key="4">
    <citation type="journal article" date="2003" name="Nature">
        <title>Sequencing and comparison of yeast species to identify genes and regulatory elements.</title>
        <authorList>
            <person name="Kellis M."/>
            <person name="Patterson N."/>
            <person name="Endrizzi M."/>
            <person name="Birren B.W."/>
            <person name="Lander E.S."/>
        </authorList>
    </citation>
    <scope>IDENTIFICATION OF PROBABLE INITIATION SITE</scope>
</reference>
<reference key="5">
    <citation type="journal article" date="2003" name="Nature">
        <title>Global analysis of protein localization in budding yeast.</title>
        <authorList>
            <person name="Huh W.-K."/>
            <person name="Falvo J.V."/>
            <person name="Gerke L.C."/>
            <person name="Carroll A.S."/>
            <person name="Howson R.W."/>
            <person name="Weissman J.S."/>
            <person name="O'Shea E.K."/>
        </authorList>
    </citation>
    <scope>SUBCELLULAR LOCATION [LARGE SCALE ANALYSIS]</scope>
</reference>
<reference key="6">
    <citation type="journal article" date="2003" name="Nature">
        <title>Global analysis of protein expression in yeast.</title>
        <authorList>
            <person name="Ghaemmaghami S."/>
            <person name="Huh W.-K."/>
            <person name="Bower K."/>
            <person name="Howson R.W."/>
            <person name="Belle A."/>
            <person name="Dephoure N."/>
            <person name="O'Shea E.K."/>
            <person name="Weissman J.S."/>
        </authorList>
    </citation>
    <scope>LEVEL OF PROTEIN EXPRESSION [LARGE SCALE ANALYSIS]</scope>
</reference>
<reference key="7">
    <citation type="journal article" date="2003" name="Science">
        <title>Finding functional features in Saccharomyces genomes by phylogenetic footprinting.</title>
        <authorList>
            <person name="Cliften P.F."/>
            <person name="Sudarsanam P."/>
            <person name="Desikan A."/>
            <person name="Fulton L."/>
            <person name="Fulton B."/>
            <person name="Majors J."/>
            <person name="Waterston R."/>
            <person name="Cohen B.A."/>
            <person name="Johnston M."/>
        </authorList>
    </citation>
    <scope>IDENTIFICATION OF PROBABLE INITIATION SITE</scope>
</reference>
<reference key="8">
    <citation type="journal article" date="2007" name="J. Proteome Res.">
        <title>Large-scale phosphorylation analysis of alpha-factor-arrested Saccharomyces cerevisiae.</title>
        <authorList>
            <person name="Li X."/>
            <person name="Gerber S.A."/>
            <person name="Rudner A.D."/>
            <person name="Beausoleil S.A."/>
            <person name="Haas W."/>
            <person name="Villen J."/>
            <person name="Elias J.E."/>
            <person name="Gygi S.P."/>
        </authorList>
    </citation>
    <scope>PHOSPHORYLATION [LARGE SCALE ANALYSIS] AT SER-232; SER-238 AND SER-241</scope>
    <scope>IDENTIFICATION BY MASS SPECTROMETRY [LARGE SCALE ANALYSIS]</scope>
    <source>
        <strain>ADR376</strain>
    </source>
</reference>
<reference key="9">
    <citation type="journal article" date="2007" name="Proc. Natl. Acad. Sci. U.S.A.">
        <title>Analysis of phosphorylation sites on proteins from Saccharomyces cerevisiae by electron transfer dissociation (ETD) mass spectrometry.</title>
        <authorList>
            <person name="Chi A."/>
            <person name="Huttenhower C."/>
            <person name="Geer L.Y."/>
            <person name="Coon J.J."/>
            <person name="Syka J.E.P."/>
            <person name="Bai D.L."/>
            <person name="Shabanowitz J."/>
            <person name="Burke D.J."/>
            <person name="Troyanskaya O.G."/>
            <person name="Hunt D.F."/>
        </authorList>
    </citation>
    <scope>PHOSPHORYLATION [LARGE SCALE ANALYSIS] AT SER-19</scope>
    <scope>IDENTIFICATION BY MASS SPECTROMETRY [LARGE SCALE ANALYSIS]</scope>
</reference>
<reference key="10">
    <citation type="journal article" date="2008" name="Mol. Cell. Proteomics">
        <title>A multidimensional chromatography technology for in-depth phosphoproteome analysis.</title>
        <authorList>
            <person name="Albuquerque C.P."/>
            <person name="Smolka M.B."/>
            <person name="Payne S.H."/>
            <person name="Bafna V."/>
            <person name="Eng J."/>
            <person name="Zhou H."/>
        </authorList>
    </citation>
    <scope>PHOSPHORYLATION [LARGE SCALE ANALYSIS] AT SER-232</scope>
    <scope>IDENTIFICATION BY MASS SPECTROMETRY [LARGE SCALE ANALYSIS]</scope>
</reference>
<reference key="11">
    <citation type="journal article" date="2009" name="Science">
        <title>Global analysis of Cdk1 substrate phosphorylation sites provides insights into evolution.</title>
        <authorList>
            <person name="Holt L.J."/>
            <person name="Tuch B.B."/>
            <person name="Villen J."/>
            <person name="Johnson A.D."/>
            <person name="Gygi S.P."/>
            <person name="Morgan D.O."/>
        </authorList>
    </citation>
    <scope>PHOSPHORYLATION [LARGE SCALE ANALYSIS] AT SER-232</scope>
    <scope>IDENTIFICATION BY MASS SPECTROMETRY [LARGE SCALE ANALYSIS]</scope>
</reference>
<dbReference type="EC" id="2.7.11.1"/>
<dbReference type="EMBL" id="Z26878">
    <property type="protein sequence ID" value="CAA81519.1"/>
    <property type="status" value="ALT_INIT"/>
    <property type="molecule type" value="Genomic_DNA"/>
</dbReference>
<dbReference type="EMBL" id="Z28168">
    <property type="protein sequence ID" value="CAA82010.1"/>
    <property type="status" value="ALT_INIT"/>
    <property type="molecule type" value="Genomic_DNA"/>
</dbReference>
<dbReference type="EMBL" id="BK006944">
    <property type="protein sequence ID" value="DAA08997.1"/>
    <property type="molecule type" value="Genomic_DNA"/>
</dbReference>
<dbReference type="PIR" id="S37998">
    <property type="entry name" value="S37998"/>
</dbReference>
<dbReference type="RefSeq" id="NP_012753.2">
    <property type="nucleotide sequence ID" value="NM_001179734.1"/>
</dbReference>
<dbReference type="SMR" id="P36004"/>
<dbReference type="BioGRID" id="33969">
    <property type="interactions" value="158"/>
</dbReference>
<dbReference type="DIP" id="DIP-4838N"/>
<dbReference type="FunCoup" id="P36004">
    <property type="interactions" value="358"/>
</dbReference>
<dbReference type="IntAct" id="P36004">
    <property type="interactions" value="9"/>
</dbReference>
<dbReference type="MINT" id="P36004"/>
<dbReference type="STRING" id="4932.YKL168C"/>
<dbReference type="iPTMnet" id="P36004"/>
<dbReference type="PaxDb" id="4932-YKL168C"/>
<dbReference type="PeptideAtlas" id="P36004"/>
<dbReference type="EnsemblFungi" id="YKL168C_mRNA">
    <property type="protein sequence ID" value="YKL168C"/>
    <property type="gene ID" value="YKL168C"/>
</dbReference>
<dbReference type="GeneID" id="853686"/>
<dbReference type="KEGG" id="sce:YKL168C"/>
<dbReference type="AGR" id="SGD:S000001651"/>
<dbReference type="SGD" id="S000001651">
    <property type="gene designation" value="KKQ8"/>
</dbReference>
<dbReference type="VEuPathDB" id="FungiDB:YKL168C"/>
<dbReference type="eggNOG" id="KOG0590">
    <property type="taxonomic scope" value="Eukaryota"/>
</dbReference>
<dbReference type="GeneTree" id="ENSGT00940000176608"/>
<dbReference type="HOGENOM" id="CLU_016904_1_0_1"/>
<dbReference type="InParanoid" id="P36004"/>
<dbReference type="OMA" id="ECDIENA"/>
<dbReference type="OrthoDB" id="6513151at2759"/>
<dbReference type="BioCyc" id="YEAST:G3O-31936-MONOMER"/>
<dbReference type="BioGRID-ORCS" id="853686">
    <property type="hits" value="1 hit in 13 CRISPR screens"/>
</dbReference>
<dbReference type="PRO" id="PR:P36004"/>
<dbReference type="Proteomes" id="UP000002311">
    <property type="component" value="Chromosome XI"/>
</dbReference>
<dbReference type="RNAct" id="P36004">
    <property type="molecule type" value="protein"/>
</dbReference>
<dbReference type="GO" id="GO:0005737">
    <property type="term" value="C:cytoplasm"/>
    <property type="evidence" value="ECO:0000314"/>
    <property type="project" value="SGD"/>
</dbReference>
<dbReference type="GO" id="GO:0005524">
    <property type="term" value="F:ATP binding"/>
    <property type="evidence" value="ECO:0007669"/>
    <property type="project" value="UniProtKB-KW"/>
</dbReference>
<dbReference type="GO" id="GO:0106310">
    <property type="term" value="F:protein serine kinase activity"/>
    <property type="evidence" value="ECO:0007669"/>
    <property type="project" value="RHEA"/>
</dbReference>
<dbReference type="GO" id="GO:0004674">
    <property type="term" value="F:protein serine/threonine kinase activity"/>
    <property type="evidence" value="ECO:0000318"/>
    <property type="project" value="GO_Central"/>
</dbReference>
<dbReference type="GO" id="GO:0030003">
    <property type="term" value="P:intracellular monoatomic cation homeostasis"/>
    <property type="evidence" value="ECO:0000318"/>
    <property type="project" value="GO_Central"/>
</dbReference>
<dbReference type="FunFam" id="1.10.510.10:FF:001086">
    <property type="entry name" value="Probable serine/threonine-protein kinase KKQ8"/>
    <property type="match status" value="1"/>
</dbReference>
<dbReference type="Gene3D" id="1.10.510.10">
    <property type="entry name" value="Transferase(Phosphotransferase) domain 1"/>
    <property type="match status" value="1"/>
</dbReference>
<dbReference type="InterPro" id="IPR011009">
    <property type="entry name" value="Kinase-like_dom_sf"/>
</dbReference>
<dbReference type="InterPro" id="IPR000719">
    <property type="entry name" value="Prot_kinase_dom"/>
</dbReference>
<dbReference type="InterPro" id="IPR008271">
    <property type="entry name" value="Ser/Thr_kinase_AS"/>
</dbReference>
<dbReference type="PANTHER" id="PTHR24343">
    <property type="entry name" value="SERINE/THREONINE KINASE"/>
    <property type="match status" value="1"/>
</dbReference>
<dbReference type="PANTHER" id="PTHR24343:SF43">
    <property type="entry name" value="SERINE_THREONINE-PROTEIN KINASE HAL5-RELATED"/>
    <property type="match status" value="1"/>
</dbReference>
<dbReference type="Pfam" id="PF00069">
    <property type="entry name" value="Pkinase"/>
    <property type="match status" value="1"/>
</dbReference>
<dbReference type="SMART" id="SM00220">
    <property type="entry name" value="S_TKc"/>
    <property type="match status" value="1"/>
</dbReference>
<dbReference type="SUPFAM" id="SSF56112">
    <property type="entry name" value="Protein kinase-like (PK-like)"/>
    <property type="match status" value="1"/>
</dbReference>
<dbReference type="PROSITE" id="PS50011">
    <property type="entry name" value="PROTEIN_KINASE_DOM"/>
    <property type="match status" value="1"/>
</dbReference>
<dbReference type="PROSITE" id="PS00108">
    <property type="entry name" value="PROTEIN_KINASE_ST"/>
    <property type="match status" value="1"/>
</dbReference>